<feature type="chain" id="PRO_0000262591" description="Flotillin-1">
    <location>
        <begin position="1"/>
        <end position="427"/>
    </location>
</feature>
<feature type="modified residue" description="Phosphoserine" evidence="3">
    <location>
        <position position="19"/>
    </location>
</feature>
<feature type="modified residue" description="Phosphoserine" evidence="3">
    <location>
        <position position="163"/>
    </location>
</feature>
<feature type="modified residue" description="Phosphoserine" evidence="3">
    <location>
        <position position="385"/>
    </location>
</feature>
<feature type="modified residue" description="Phosphothreonine" evidence="3">
    <location>
        <position position="387"/>
    </location>
</feature>
<proteinExistence type="evidence at transcript level"/>
<name>FLOT1_PONAB</name>
<sequence length="427" mass="47375">MFFTCGSNEAMVVSGFCRSPPVMVAGGRVFVLPCIQQIQRISLNTLTLNVKSEKVYTRHGVPISVTGIAQVKIQGQNKEMLAAACQMFLGKTEAEIAHIALETLEGHQRAIMAHMTVEEIYKDRQKFSEQVFKVASSDLVNMGISVVSYTLKDIHDDQDYLHSLGKARTAQVQKDARIGEAEAKRDAGIREAKAKQEKVSAQYLSEIEMAKAQRDYELKKAAYDIEVNTRRAQADLAYQLQVAKTKQQIEEQRVQVQVVERAQQVAVQEQEIARREKELEARVRKPAEAERYKLERLAEAEKSQLIMQAEAEAESVRMRGEAEAFAIGARARAEAEQMAKKAEAFQLYQEAAQLDMLLEKLPQVAEEISGPLTSANKITLASSGSGTMGAAKVTGEVLDILTRLPESVERLTGVSISQVNHKPLRTA</sequence>
<organism>
    <name type="scientific">Pongo abelii</name>
    <name type="common">Sumatran orangutan</name>
    <name type="synonym">Pongo pygmaeus abelii</name>
    <dbReference type="NCBI Taxonomy" id="9601"/>
    <lineage>
        <taxon>Eukaryota</taxon>
        <taxon>Metazoa</taxon>
        <taxon>Chordata</taxon>
        <taxon>Craniata</taxon>
        <taxon>Vertebrata</taxon>
        <taxon>Euteleostomi</taxon>
        <taxon>Mammalia</taxon>
        <taxon>Eutheria</taxon>
        <taxon>Euarchontoglires</taxon>
        <taxon>Primates</taxon>
        <taxon>Haplorrhini</taxon>
        <taxon>Catarrhini</taxon>
        <taxon>Hominidae</taxon>
        <taxon>Pongo</taxon>
    </lineage>
</organism>
<protein>
    <recommendedName>
        <fullName>Flotillin-1</fullName>
    </recommendedName>
</protein>
<dbReference type="EMBL" id="CR858626">
    <property type="protein sequence ID" value="CAH90846.1"/>
    <property type="molecule type" value="mRNA"/>
</dbReference>
<dbReference type="RefSeq" id="NP_001125483.1">
    <property type="nucleotide sequence ID" value="NM_001132011.1"/>
</dbReference>
<dbReference type="SMR" id="Q5RBL4"/>
<dbReference type="STRING" id="9601.ENSPPYP00000024633"/>
<dbReference type="GeneID" id="100172392"/>
<dbReference type="KEGG" id="pon:100172392"/>
<dbReference type="CTD" id="10211"/>
<dbReference type="eggNOG" id="KOG2668">
    <property type="taxonomic scope" value="Eukaryota"/>
</dbReference>
<dbReference type="InParanoid" id="Q5RBL4"/>
<dbReference type="OrthoDB" id="6080404at2759"/>
<dbReference type="Proteomes" id="UP000001595">
    <property type="component" value="Unplaced"/>
</dbReference>
<dbReference type="GO" id="GO:0005768">
    <property type="term" value="C:endosome"/>
    <property type="evidence" value="ECO:0000250"/>
    <property type="project" value="UniProtKB"/>
</dbReference>
<dbReference type="GO" id="GO:0016600">
    <property type="term" value="C:flotillin complex"/>
    <property type="evidence" value="ECO:0007669"/>
    <property type="project" value="UniProtKB-ARBA"/>
</dbReference>
<dbReference type="GO" id="GO:0042470">
    <property type="term" value="C:melanosome"/>
    <property type="evidence" value="ECO:0007669"/>
    <property type="project" value="UniProtKB-SubCell"/>
</dbReference>
<dbReference type="GO" id="GO:0045121">
    <property type="term" value="C:membrane raft"/>
    <property type="evidence" value="ECO:0000250"/>
    <property type="project" value="UniProtKB"/>
</dbReference>
<dbReference type="GO" id="GO:0002020">
    <property type="term" value="F:protease binding"/>
    <property type="evidence" value="ECO:0007669"/>
    <property type="project" value="TreeGrafter"/>
</dbReference>
<dbReference type="GO" id="GO:1901890">
    <property type="term" value="P:positive regulation of cell junction assembly"/>
    <property type="evidence" value="ECO:0007669"/>
    <property type="project" value="TreeGrafter"/>
</dbReference>
<dbReference type="GO" id="GO:2000049">
    <property type="term" value="P:positive regulation of cell-cell adhesion mediated by cadherin"/>
    <property type="evidence" value="ECO:0007669"/>
    <property type="project" value="TreeGrafter"/>
</dbReference>
<dbReference type="GO" id="GO:0045807">
    <property type="term" value="P:positive regulation of endocytosis"/>
    <property type="evidence" value="ECO:0007669"/>
    <property type="project" value="TreeGrafter"/>
</dbReference>
<dbReference type="GO" id="GO:0070528">
    <property type="term" value="P:protein kinase C signaling"/>
    <property type="evidence" value="ECO:0007669"/>
    <property type="project" value="TreeGrafter"/>
</dbReference>
<dbReference type="GO" id="GO:0072659">
    <property type="term" value="P:protein localization to plasma membrane"/>
    <property type="evidence" value="ECO:0007669"/>
    <property type="project" value="TreeGrafter"/>
</dbReference>
<dbReference type="GO" id="GO:0002090">
    <property type="term" value="P:regulation of receptor internalization"/>
    <property type="evidence" value="ECO:0007669"/>
    <property type="project" value="TreeGrafter"/>
</dbReference>
<dbReference type="CDD" id="cd03399">
    <property type="entry name" value="SPFH_flotillin"/>
    <property type="match status" value="1"/>
</dbReference>
<dbReference type="FunFam" id="3.30.479.30:FF:000003">
    <property type="entry name" value="Flotillin 2"/>
    <property type="match status" value="1"/>
</dbReference>
<dbReference type="Gene3D" id="3.30.479.30">
    <property type="entry name" value="Band 7 domain"/>
    <property type="match status" value="1"/>
</dbReference>
<dbReference type="InterPro" id="IPR001107">
    <property type="entry name" value="Band_7"/>
</dbReference>
<dbReference type="InterPro" id="IPR036013">
    <property type="entry name" value="Band_7/SPFH_dom_sf"/>
</dbReference>
<dbReference type="InterPro" id="IPR027705">
    <property type="entry name" value="Flotillin_fam"/>
</dbReference>
<dbReference type="PANTHER" id="PTHR13806:SF46">
    <property type="entry name" value="FLOTILLIN-1-RELATED"/>
    <property type="match status" value="1"/>
</dbReference>
<dbReference type="PANTHER" id="PTHR13806">
    <property type="entry name" value="FLOTILLIN-RELATED"/>
    <property type="match status" value="1"/>
</dbReference>
<dbReference type="Pfam" id="PF01145">
    <property type="entry name" value="Band_7"/>
    <property type="match status" value="1"/>
</dbReference>
<dbReference type="SMART" id="SM00244">
    <property type="entry name" value="PHB"/>
    <property type="match status" value="1"/>
</dbReference>
<dbReference type="SUPFAM" id="SSF117892">
    <property type="entry name" value="Band 7/SPFH domain"/>
    <property type="match status" value="1"/>
</dbReference>
<comment type="function">
    <text evidence="1">May act as a scaffolding protein within caveolar membranes, functionally participating in formation of caveolae or caveolae-like vesicles.</text>
</comment>
<comment type="subunit">
    <text evidence="1">Heterooligomeric complex of flotillin-1 and flotillin-2 and caveolin-1 and caveolin-2. Interacts with ECPAS.</text>
</comment>
<comment type="subcellular location">
    <subcellularLocation>
        <location evidence="3">Cell membrane</location>
        <topology evidence="3">Peripheral membrane protein</topology>
    </subcellularLocation>
    <subcellularLocation>
        <location evidence="3">Endosome</location>
    </subcellularLocation>
    <subcellularLocation>
        <location evidence="2">Membrane</location>
        <location evidence="2">Caveola</location>
        <topology evidence="2">Peripheral membrane protein</topology>
    </subcellularLocation>
    <subcellularLocation>
        <location evidence="3">Melanosome</location>
    </subcellularLocation>
    <subcellularLocation>
        <location evidence="3">Membrane raft</location>
    </subcellularLocation>
    <text evidence="2 3">Identified by mass spectrometry in melanosome fractions from stage I to stage IV (By similarity). Membrane-associated protein of caveola (By similarity).</text>
</comment>
<comment type="similarity">
    <text evidence="4">Belongs to the band 7/mec-2 family. Flotillin subfamily.</text>
</comment>
<evidence type="ECO:0000250" key="1"/>
<evidence type="ECO:0000250" key="2">
    <source>
        <dbReference type="UniProtKB" id="O08917"/>
    </source>
</evidence>
<evidence type="ECO:0000250" key="3">
    <source>
        <dbReference type="UniProtKB" id="O75955"/>
    </source>
</evidence>
<evidence type="ECO:0000305" key="4"/>
<keyword id="KW-1003">Cell membrane</keyword>
<keyword id="KW-0967">Endosome</keyword>
<keyword id="KW-0472">Membrane</keyword>
<keyword id="KW-0597">Phosphoprotein</keyword>
<keyword id="KW-1185">Reference proteome</keyword>
<reference key="1">
    <citation type="submission" date="2004-11" db="EMBL/GenBank/DDBJ databases">
        <authorList>
            <consortium name="The German cDNA consortium"/>
        </authorList>
    </citation>
    <scope>NUCLEOTIDE SEQUENCE [LARGE SCALE MRNA]</scope>
    <source>
        <tissue>Kidney</tissue>
    </source>
</reference>
<accession>Q5RBL4</accession>
<gene>
    <name type="primary">FLOT1</name>
</gene>